<organism>
    <name type="scientific">Staphylococcus aureus (strain MW2)</name>
    <dbReference type="NCBI Taxonomy" id="196620"/>
    <lineage>
        <taxon>Bacteria</taxon>
        <taxon>Bacillati</taxon>
        <taxon>Bacillota</taxon>
        <taxon>Bacilli</taxon>
        <taxon>Bacillales</taxon>
        <taxon>Staphylococcaceae</taxon>
        <taxon>Staphylococcus</taxon>
    </lineage>
</organism>
<protein>
    <recommendedName>
        <fullName evidence="2">Large ribosomal subunit protein bL27</fullName>
    </recommendedName>
    <alternativeName>
        <fullName evidence="3">50S ribosomal protein L27</fullName>
    </alternativeName>
</protein>
<reference key="1">
    <citation type="journal article" date="2002" name="Lancet">
        <title>Genome and virulence determinants of high virulence community-acquired MRSA.</title>
        <authorList>
            <person name="Baba T."/>
            <person name="Takeuchi F."/>
            <person name="Kuroda M."/>
            <person name="Yuzawa H."/>
            <person name="Aoki K."/>
            <person name="Oguchi A."/>
            <person name="Nagai Y."/>
            <person name="Iwama N."/>
            <person name="Asano K."/>
            <person name="Naimi T."/>
            <person name="Kuroda H."/>
            <person name="Cui L."/>
            <person name="Yamamoto K."/>
            <person name="Hiramatsu K."/>
        </authorList>
    </citation>
    <scope>NUCLEOTIDE SEQUENCE [LARGE SCALE GENOMIC DNA]</scope>
    <source>
        <strain>MW2</strain>
    </source>
</reference>
<comment type="PTM">
    <text evidence="1">The N-terminus is cleaved by ribosomal processing cysteine protease Prp.</text>
</comment>
<comment type="similarity">
    <text evidence="2">Belongs to the bacterial ribosomal protein bL27 family.</text>
</comment>
<evidence type="ECO:0000250" key="1">
    <source>
        <dbReference type="UniProtKB" id="Q2FXT0"/>
    </source>
</evidence>
<evidence type="ECO:0000255" key="2">
    <source>
        <dbReference type="HAMAP-Rule" id="MF_00539"/>
    </source>
</evidence>
<evidence type="ECO:0000305" key="3"/>
<dbReference type="EMBL" id="BA000033">
    <property type="protein sequence ID" value="BAB95460.1"/>
    <property type="molecule type" value="Genomic_DNA"/>
</dbReference>
<dbReference type="RefSeq" id="WP_000916187.1">
    <property type="nucleotide sequence ID" value="NC_003923.1"/>
</dbReference>
<dbReference type="PDB" id="8Y36">
    <property type="method" value="EM"/>
    <property type="resolution" value="2.65 A"/>
    <property type="chains" value="U=12-93"/>
</dbReference>
<dbReference type="PDB" id="8Y37">
    <property type="method" value="EM"/>
    <property type="resolution" value="2.53 A"/>
    <property type="chains" value="U=12-93"/>
</dbReference>
<dbReference type="PDB" id="8Y38">
    <property type="method" value="EM"/>
    <property type="resolution" value="2.58 A"/>
    <property type="chains" value="U=12-93"/>
</dbReference>
<dbReference type="PDB" id="8Y39">
    <property type="method" value="EM"/>
    <property type="resolution" value="3.60 A"/>
    <property type="chains" value="U=12-93"/>
</dbReference>
<dbReference type="PDBsum" id="8Y36"/>
<dbReference type="PDBsum" id="8Y37"/>
<dbReference type="PDBsum" id="8Y38"/>
<dbReference type="PDBsum" id="8Y39"/>
<dbReference type="EMDB" id="EMD-38873"/>
<dbReference type="EMDB" id="EMD-38874"/>
<dbReference type="EMDB" id="EMD-38875"/>
<dbReference type="EMDB" id="EMD-38876"/>
<dbReference type="SMR" id="P66134"/>
<dbReference type="GeneID" id="98346013"/>
<dbReference type="KEGG" id="sam:MW1595"/>
<dbReference type="HOGENOM" id="CLU_095424_4_0_9"/>
<dbReference type="GO" id="GO:0022625">
    <property type="term" value="C:cytosolic large ribosomal subunit"/>
    <property type="evidence" value="ECO:0007669"/>
    <property type="project" value="TreeGrafter"/>
</dbReference>
<dbReference type="GO" id="GO:0003735">
    <property type="term" value="F:structural constituent of ribosome"/>
    <property type="evidence" value="ECO:0007669"/>
    <property type="project" value="InterPro"/>
</dbReference>
<dbReference type="GO" id="GO:0006412">
    <property type="term" value="P:translation"/>
    <property type="evidence" value="ECO:0007669"/>
    <property type="project" value="UniProtKB-UniRule"/>
</dbReference>
<dbReference type="FunFam" id="2.40.50.100:FF:000004">
    <property type="entry name" value="50S ribosomal protein L27"/>
    <property type="match status" value="1"/>
</dbReference>
<dbReference type="Gene3D" id="2.40.50.100">
    <property type="match status" value="1"/>
</dbReference>
<dbReference type="HAMAP" id="MF_00539">
    <property type="entry name" value="Ribosomal_bL27"/>
    <property type="match status" value="1"/>
</dbReference>
<dbReference type="InterPro" id="IPR001684">
    <property type="entry name" value="Ribosomal_bL27"/>
</dbReference>
<dbReference type="InterPro" id="IPR018261">
    <property type="entry name" value="Ribosomal_bL27_CS"/>
</dbReference>
<dbReference type="NCBIfam" id="TIGR00062">
    <property type="entry name" value="L27"/>
    <property type="match status" value="1"/>
</dbReference>
<dbReference type="PANTHER" id="PTHR15893:SF0">
    <property type="entry name" value="LARGE RIBOSOMAL SUBUNIT PROTEIN BL27M"/>
    <property type="match status" value="1"/>
</dbReference>
<dbReference type="PANTHER" id="PTHR15893">
    <property type="entry name" value="RIBOSOMAL PROTEIN L27"/>
    <property type="match status" value="1"/>
</dbReference>
<dbReference type="Pfam" id="PF01016">
    <property type="entry name" value="Ribosomal_L27"/>
    <property type="match status" value="1"/>
</dbReference>
<dbReference type="PRINTS" id="PR00063">
    <property type="entry name" value="RIBOSOMALL27"/>
</dbReference>
<dbReference type="SUPFAM" id="SSF110324">
    <property type="entry name" value="Ribosomal L27 protein-like"/>
    <property type="match status" value="1"/>
</dbReference>
<dbReference type="PROSITE" id="PS00831">
    <property type="entry name" value="RIBOSOMAL_L27"/>
    <property type="match status" value="1"/>
</dbReference>
<accession>P66134</accession>
<accession>Q99TK8</accession>
<name>RL27_STAAW</name>
<feature type="propeptide" id="PRO_0000459935" evidence="1">
    <location>
        <begin position="1"/>
        <end position="9"/>
    </location>
</feature>
<feature type="chain" id="PRO_0000181169" description="Large ribosomal subunit protein bL27">
    <location>
        <begin position="10"/>
        <end position="94"/>
    </location>
</feature>
<keyword id="KW-0002">3D-structure</keyword>
<keyword id="KW-0687">Ribonucleoprotein</keyword>
<keyword id="KW-0689">Ribosomal protein</keyword>
<sequence>MLKLNLQFFASKKGVSSTKNGRDSESKRLGAKRADGQFVTGGSILYRQRGTKIYPGENVGRGGDDTLFAKIDGVVKFERKGRDKKQVSVYAVAE</sequence>
<proteinExistence type="evidence at protein level"/>
<gene>
    <name evidence="2" type="primary">rpmA</name>
    <name type="ordered locus">MW1595</name>
</gene>